<accession>Q2K7G5</accession>
<dbReference type="EC" id="2.7.8.26" evidence="1"/>
<dbReference type="EMBL" id="CP000133">
    <property type="protein sequence ID" value="ABC91221.1"/>
    <property type="molecule type" value="Genomic_DNA"/>
</dbReference>
<dbReference type="RefSeq" id="WP_011425700.1">
    <property type="nucleotide sequence ID" value="NC_007761.1"/>
</dbReference>
<dbReference type="KEGG" id="ret:RHE_CH02444"/>
<dbReference type="eggNOG" id="COG0368">
    <property type="taxonomic scope" value="Bacteria"/>
</dbReference>
<dbReference type="HOGENOM" id="CLU_057426_1_0_5"/>
<dbReference type="OrthoDB" id="9794626at2"/>
<dbReference type="UniPathway" id="UPA00148">
    <property type="reaction ID" value="UER00238"/>
</dbReference>
<dbReference type="Proteomes" id="UP000001936">
    <property type="component" value="Chromosome"/>
</dbReference>
<dbReference type="GO" id="GO:0005886">
    <property type="term" value="C:plasma membrane"/>
    <property type="evidence" value="ECO:0007669"/>
    <property type="project" value="UniProtKB-SubCell"/>
</dbReference>
<dbReference type="GO" id="GO:0051073">
    <property type="term" value="F:adenosylcobinamide-GDP ribazoletransferase activity"/>
    <property type="evidence" value="ECO:0007669"/>
    <property type="project" value="UniProtKB-UniRule"/>
</dbReference>
<dbReference type="GO" id="GO:0008818">
    <property type="term" value="F:cobalamin 5'-phosphate synthase activity"/>
    <property type="evidence" value="ECO:0007669"/>
    <property type="project" value="UniProtKB-UniRule"/>
</dbReference>
<dbReference type="GO" id="GO:0009236">
    <property type="term" value="P:cobalamin biosynthetic process"/>
    <property type="evidence" value="ECO:0007669"/>
    <property type="project" value="UniProtKB-UniRule"/>
</dbReference>
<dbReference type="HAMAP" id="MF_00719">
    <property type="entry name" value="CobS"/>
    <property type="match status" value="1"/>
</dbReference>
<dbReference type="InterPro" id="IPR003805">
    <property type="entry name" value="CobS"/>
</dbReference>
<dbReference type="NCBIfam" id="TIGR00317">
    <property type="entry name" value="cobS"/>
    <property type="match status" value="1"/>
</dbReference>
<dbReference type="NCBIfam" id="NF001276">
    <property type="entry name" value="PRK00235.1-2"/>
    <property type="match status" value="1"/>
</dbReference>
<dbReference type="PANTHER" id="PTHR34148">
    <property type="entry name" value="ADENOSYLCOBINAMIDE-GDP RIBAZOLETRANSFERASE"/>
    <property type="match status" value="1"/>
</dbReference>
<dbReference type="PANTHER" id="PTHR34148:SF1">
    <property type="entry name" value="ADENOSYLCOBINAMIDE-GDP RIBAZOLETRANSFERASE"/>
    <property type="match status" value="1"/>
</dbReference>
<dbReference type="Pfam" id="PF02654">
    <property type="entry name" value="CobS"/>
    <property type="match status" value="1"/>
</dbReference>
<comment type="function">
    <text evidence="1">Joins adenosylcobinamide-GDP and alpha-ribazole to generate adenosylcobalamin (Ado-cobalamin). Also synthesizes adenosylcobalamin 5'-phosphate from adenosylcobinamide-GDP and alpha-ribazole 5'-phosphate.</text>
</comment>
<comment type="catalytic activity">
    <reaction evidence="1">
        <text>alpha-ribazole + adenosylcob(III)inamide-GDP = adenosylcob(III)alamin + GMP + H(+)</text>
        <dbReference type="Rhea" id="RHEA:16049"/>
        <dbReference type="ChEBI" id="CHEBI:10329"/>
        <dbReference type="ChEBI" id="CHEBI:15378"/>
        <dbReference type="ChEBI" id="CHEBI:18408"/>
        <dbReference type="ChEBI" id="CHEBI:58115"/>
        <dbReference type="ChEBI" id="CHEBI:60487"/>
        <dbReference type="EC" id="2.7.8.26"/>
    </reaction>
</comment>
<comment type="catalytic activity">
    <reaction evidence="1">
        <text>alpha-ribazole 5'-phosphate + adenosylcob(III)inamide-GDP = adenosylcob(III)alamin 5'-phosphate + GMP + H(+)</text>
        <dbReference type="Rhea" id="RHEA:23560"/>
        <dbReference type="ChEBI" id="CHEBI:15378"/>
        <dbReference type="ChEBI" id="CHEBI:57918"/>
        <dbReference type="ChEBI" id="CHEBI:58115"/>
        <dbReference type="ChEBI" id="CHEBI:60487"/>
        <dbReference type="ChEBI" id="CHEBI:60493"/>
        <dbReference type="EC" id="2.7.8.26"/>
    </reaction>
</comment>
<comment type="cofactor">
    <cofactor evidence="1">
        <name>Mg(2+)</name>
        <dbReference type="ChEBI" id="CHEBI:18420"/>
    </cofactor>
</comment>
<comment type="pathway">
    <text evidence="1">Cofactor biosynthesis; adenosylcobalamin biosynthesis; adenosylcobalamin from cob(II)yrinate a,c-diamide: step 7/7.</text>
</comment>
<comment type="subcellular location">
    <subcellularLocation>
        <location evidence="1">Cell inner membrane</location>
        <topology evidence="1">Multi-pass membrane protein</topology>
    </subcellularLocation>
</comment>
<comment type="similarity">
    <text evidence="1">Belongs to the CobS family.</text>
</comment>
<sequence>MKIKDYAVDTARAVAFLSRLPMPPALFNGYDGRLNRLVRAFPFAGLLIGFVPAVTLLLLLSLRTDPLVAALVALSVQALVTGALHEDGLADTADGIGGGSSREQSLIIMKDSRIGTYGAIALILSFAIRAAALAAIIRHSSPLAAALAIPAVAALSRGAIAWHWQRLPPAKPDGVAASNGQPNEAAMHFALVSAGLLAALLIWPPFGLRPLVAGLLVAGVAGFAFTVFIRRKLAGHTGDTLGATQQICEIATLCALATAL</sequence>
<gene>
    <name evidence="1" type="primary">cobS</name>
    <name type="ordered locus">RHE_CH02444</name>
</gene>
<organism>
    <name type="scientific">Rhizobium etli (strain ATCC 51251 / DSM 11541 / JCM 21823 / NBRC 15573 / CFN 42)</name>
    <dbReference type="NCBI Taxonomy" id="347834"/>
    <lineage>
        <taxon>Bacteria</taxon>
        <taxon>Pseudomonadati</taxon>
        <taxon>Pseudomonadota</taxon>
        <taxon>Alphaproteobacteria</taxon>
        <taxon>Hyphomicrobiales</taxon>
        <taxon>Rhizobiaceae</taxon>
        <taxon>Rhizobium/Agrobacterium group</taxon>
        <taxon>Rhizobium</taxon>
    </lineage>
</organism>
<protein>
    <recommendedName>
        <fullName evidence="1">Adenosylcobinamide-GDP ribazoletransferase</fullName>
        <ecNumber evidence="1">2.7.8.26</ecNumber>
    </recommendedName>
    <alternativeName>
        <fullName evidence="1">Cobalamin synthase</fullName>
    </alternativeName>
    <alternativeName>
        <fullName evidence="1">Cobalamin-5'-phosphate synthase</fullName>
    </alternativeName>
</protein>
<reference key="1">
    <citation type="journal article" date="2006" name="Proc. Natl. Acad. Sci. U.S.A.">
        <title>The partitioned Rhizobium etli genome: genetic and metabolic redundancy in seven interacting replicons.</title>
        <authorList>
            <person name="Gonzalez V."/>
            <person name="Santamaria R.I."/>
            <person name="Bustos P."/>
            <person name="Hernandez-Gonzalez I."/>
            <person name="Medrano-Soto A."/>
            <person name="Moreno-Hagelsieb G."/>
            <person name="Janga S.C."/>
            <person name="Ramirez M.A."/>
            <person name="Jimenez-Jacinto V."/>
            <person name="Collado-Vides J."/>
            <person name="Davila G."/>
        </authorList>
    </citation>
    <scope>NUCLEOTIDE SEQUENCE [LARGE SCALE GENOMIC DNA]</scope>
    <source>
        <strain>ATCC 51251 / DSM 11541 / JCM 21823 / NBRC 15573 / CFN 42</strain>
    </source>
</reference>
<proteinExistence type="inferred from homology"/>
<evidence type="ECO:0000255" key="1">
    <source>
        <dbReference type="HAMAP-Rule" id="MF_00719"/>
    </source>
</evidence>
<name>COBS_RHIEC</name>
<keyword id="KW-0997">Cell inner membrane</keyword>
<keyword id="KW-1003">Cell membrane</keyword>
<keyword id="KW-0169">Cobalamin biosynthesis</keyword>
<keyword id="KW-0460">Magnesium</keyword>
<keyword id="KW-0472">Membrane</keyword>
<keyword id="KW-1185">Reference proteome</keyword>
<keyword id="KW-0808">Transferase</keyword>
<keyword id="KW-0812">Transmembrane</keyword>
<keyword id="KW-1133">Transmembrane helix</keyword>
<feature type="chain" id="PRO_1000045797" description="Adenosylcobinamide-GDP ribazoletransferase">
    <location>
        <begin position="1"/>
        <end position="260"/>
    </location>
</feature>
<feature type="transmembrane region" description="Helical" evidence="1">
    <location>
        <begin position="40"/>
        <end position="60"/>
    </location>
</feature>
<feature type="transmembrane region" description="Helical" evidence="1">
    <location>
        <begin position="64"/>
        <end position="84"/>
    </location>
</feature>
<feature type="transmembrane region" description="Helical" evidence="1">
    <location>
        <begin position="117"/>
        <end position="137"/>
    </location>
</feature>
<feature type="transmembrane region" description="Helical" evidence="1">
    <location>
        <begin position="142"/>
        <end position="162"/>
    </location>
</feature>
<feature type="transmembrane region" description="Helical" evidence="1">
    <location>
        <begin position="188"/>
        <end position="208"/>
    </location>
</feature>
<feature type="transmembrane region" description="Helical" evidence="1">
    <location>
        <begin position="210"/>
        <end position="230"/>
    </location>
</feature>